<organism>
    <name type="scientific">Serratia proteamaculans (strain 568)</name>
    <dbReference type="NCBI Taxonomy" id="399741"/>
    <lineage>
        <taxon>Bacteria</taxon>
        <taxon>Pseudomonadati</taxon>
        <taxon>Pseudomonadota</taxon>
        <taxon>Gammaproteobacteria</taxon>
        <taxon>Enterobacterales</taxon>
        <taxon>Yersiniaceae</taxon>
        <taxon>Serratia</taxon>
    </lineage>
</organism>
<evidence type="ECO:0000255" key="1">
    <source>
        <dbReference type="HAMAP-Rule" id="MF_01646"/>
    </source>
</evidence>
<sequence>MDYLPIFCQLQHKACLLVGGGEIAERKARLLLDAGAALTVNACSFTPQFHEWAALGRLTLAAGEFSAELLAEKWLVIAATDRVEVNALVYQCANQQRVFCNVVDDPKRASFIMPSIIDRSPIMVAVSSGGKAPVLARLLREKLEAVLPQHLGKLAQLGGSLRQRVKKHFSDIGSRRRFWEKLFAHDRLAQSLANNDVALAERQIEQLFSHQPQECGEVVLVGAGPGDAGLLTLKGLQQIQQADVVVYDRLVSDEIMTLVRRDAERIFVGKRAGHHCVPQEQINQILLQQAQLGKRVVRLKGGDPFIFGRGGEELETLADANIPFSVVPGITAASGCSAYSGIPLTHRDHAQSVRLVTGHAKSDGGLDWSTLAAGQQTLVFYMGLTQAADIQRQLIAHGMPAATPVALVENGTSCRQRVIEGELSQLGTLALQAASPSLIIVGSVVSLRSKLNWFSSQEPSQPLAQMA</sequence>
<reference key="1">
    <citation type="submission" date="2007-09" db="EMBL/GenBank/DDBJ databases">
        <title>Complete sequence of chromosome of Serratia proteamaculans 568.</title>
        <authorList>
            <consortium name="US DOE Joint Genome Institute"/>
            <person name="Copeland A."/>
            <person name="Lucas S."/>
            <person name="Lapidus A."/>
            <person name="Barry K."/>
            <person name="Glavina del Rio T."/>
            <person name="Dalin E."/>
            <person name="Tice H."/>
            <person name="Pitluck S."/>
            <person name="Chain P."/>
            <person name="Malfatti S."/>
            <person name="Shin M."/>
            <person name="Vergez L."/>
            <person name="Schmutz J."/>
            <person name="Larimer F."/>
            <person name="Land M."/>
            <person name="Hauser L."/>
            <person name="Kyrpides N."/>
            <person name="Kim E."/>
            <person name="Taghavi S."/>
            <person name="Newman L."/>
            <person name="Vangronsveld J."/>
            <person name="van der Lelie D."/>
            <person name="Richardson P."/>
        </authorList>
    </citation>
    <scope>NUCLEOTIDE SEQUENCE [LARGE SCALE GENOMIC DNA]</scope>
    <source>
        <strain>568</strain>
    </source>
</reference>
<keyword id="KW-0169">Cobalamin biosynthesis</keyword>
<keyword id="KW-0456">Lyase</keyword>
<keyword id="KW-0489">Methyltransferase</keyword>
<keyword id="KW-0511">Multifunctional enzyme</keyword>
<keyword id="KW-0520">NAD</keyword>
<keyword id="KW-0560">Oxidoreductase</keyword>
<keyword id="KW-0597">Phosphoprotein</keyword>
<keyword id="KW-0627">Porphyrin biosynthesis</keyword>
<keyword id="KW-0949">S-adenosyl-L-methionine</keyword>
<keyword id="KW-0808">Transferase</keyword>
<proteinExistence type="inferred from homology"/>
<gene>
    <name evidence="1" type="primary">cysG2</name>
    <name type="ordered locus">Spro_4598</name>
</gene>
<comment type="function">
    <text evidence="1">Multifunctional enzyme that catalyzes the SAM-dependent methylations of uroporphyrinogen III at position C-2 and C-7 to form precorrin-2 via precorrin-1. Then it catalyzes the NAD-dependent ring dehydrogenation of precorrin-2 to yield sirohydrochlorin. Finally, it catalyzes the ferrochelation of sirohydrochlorin to yield siroheme.</text>
</comment>
<comment type="catalytic activity">
    <reaction evidence="1">
        <text>uroporphyrinogen III + 2 S-adenosyl-L-methionine = precorrin-2 + 2 S-adenosyl-L-homocysteine + H(+)</text>
        <dbReference type="Rhea" id="RHEA:32459"/>
        <dbReference type="ChEBI" id="CHEBI:15378"/>
        <dbReference type="ChEBI" id="CHEBI:57308"/>
        <dbReference type="ChEBI" id="CHEBI:57856"/>
        <dbReference type="ChEBI" id="CHEBI:58827"/>
        <dbReference type="ChEBI" id="CHEBI:59789"/>
        <dbReference type="EC" id="2.1.1.107"/>
    </reaction>
</comment>
<comment type="catalytic activity">
    <reaction evidence="1">
        <text>precorrin-2 + NAD(+) = sirohydrochlorin + NADH + 2 H(+)</text>
        <dbReference type="Rhea" id="RHEA:15613"/>
        <dbReference type="ChEBI" id="CHEBI:15378"/>
        <dbReference type="ChEBI" id="CHEBI:57540"/>
        <dbReference type="ChEBI" id="CHEBI:57945"/>
        <dbReference type="ChEBI" id="CHEBI:58351"/>
        <dbReference type="ChEBI" id="CHEBI:58827"/>
        <dbReference type="EC" id="1.3.1.76"/>
    </reaction>
</comment>
<comment type="catalytic activity">
    <reaction evidence="1">
        <text>siroheme + 2 H(+) = sirohydrochlorin + Fe(2+)</text>
        <dbReference type="Rhea" id="RHEA:24360"/>
        <dbReference type="ChEBI" id="CHEBI:15378"/>
        <dbReference type="ChEBI" id="CHEBI:29033"/>
        <dbReference type="ChEBI" id="CHEBI:58351"/>
        <dbReference type="ChEBI" id="CHEBI:60052"/>
        <dbReference type="EC" id="4.99.1.4"/>
    </reaction>
</comment>
<comment type="pathway">
    <text evidence="1">Cofactor biosynthesis; adenosylcobalamin biosynthesis; precorrin-2 from uroporphyrinogen III: step 1/1.</text>
</comment>
<comment type="pathway">
    <text evidence="1">Cofactor biosynthesis; adenosylcobalamin biosynthesis; sirohydrochlorin from precorrin-2: step 1/1.</text>
</comment>
<comment type="pathway">
    <text evidence="1">Porphyrin-containing compound metabolism; siroheme biosynthesis; precorrin-2 from uroporphyrinogen III: step 1/1.</text>
</comment>
<comment type="pathway">
    <text evidence="1">Porphyrin-containing compound metabolism; siroheme biosynthesis; siroheme from sirohydrochlorin: step 1/1.</text>
</comment>
<comment type="pathway">
    <text evidence="1">Porphyrin-containing compound metabolism; siroheme biosynthesis; sirohydrochlorin from precorrin-2: step 1/1.</text>
</comment>
<comment type="similarity">
    <text evidence="1">In the N-terminal section; belongs to the precorrin-2 dehydrogenase / sirohydrochlorin ferrochelatase family.</text>
</comment>
<comment type="similarity">
    <text evidence="1">In the C-terminal section; belongs to the precorrin methyltransferase family.</text>
</comment>
<feature type="chain" id="PRO_0000330558" description="Siroheme synthase 2">
    <location>
        <begin position="1"/>
        <end position="467"/>
    </location>
</feature>
<feature type="region of interest" description="Precorrin-2 dehydrogenase /sirohydrochlorin ferrochelatase" evidence="1">
    <location>
        <begin position="1"/>
        <end position="204"/>
    </location>
</feature>
<feature type="region of interest" description="Uroporphyrinogen-III C-methyltransferase" evidence="1">
    <location>
        <begin position="216"/>
        <end position="467"/>
    </location>
</feature>
<feature type="active site" description="Proton acceptor" evidence="1">
    <location>
        <position position="248"/>
    </location>
</feature>
<feature type="active site" description="Proton donor" evidence="1">
    <location>
        <position position="270"/>
    </location>
</feature>
<feature type="binding site" evidence="1">
    <location>
        <begin position="22"/>
        <end position="23"/>
    </location>
    <ligand>
        <name>NAD(+)</name>
        <dbReference type="ChEBI" id="CHEBI:57540"/>
    </ligand>
</feature>
<feature type="binding site" evidence="1">
    <location>
        <begin position="43"/>
        <end position="44"/>
    </location>
    <ligand>
        <name>NAD(+)</name>
        <dbReference type="ChEBI" id="CHEBI:57540"/>
    </ligand>
</feature>
<feature type="binding site" evidence="1">
    <location>
        <position position="225"/>
    </location>
    <ligand>
        <name>S-adenosyl-L-methionine</name>
        <dbReference type="ChEBI" id="CHEBI:59789"/>
    </ligand>
</feature>
<feature type="binding site" evidence="1">
    <location>
        <begin position="301"/>
        <end position="303"/>
    </location>
    <ligand>
        <name>S-adenosyl-L-methionine</name>
        <dbReference type="ChEBI" id="CHEBI:59789"/>
    </ligand>
</feature>
<feature type="binding site" evidence="1">
    <location>
        <position position="306"/>
    </location>
    <ligand>
        <name>S-adenosyl-L-methionine</name>
        <dbReference type="ChEBI" id="CHEBI:59789"/>
    </ligand>
</feature>
<feature type="binding site" evidence="1">
    <location>
        <begin position="331"/>
        <end position="332"/>
    </location>
    <ligand>
        <name>S-adenosyl-L-methionine</name>
        <dbReference type="ChEBI" id="CHEBI:59789"/>
    </ligand>
</feature>
<feature type="binding site" evidence="1">
    <location>
        <position position="382"/>
    </location>
    <ligand>
        <name>S-adenosyl-L-methionine</name>
        <dbReference type="ChEBI" id="CHEBI:59789"/>
    </ligand>
</feature>
<feature type="binding site" evidence="1">
    <location>
        <position position="411"/>
    </location>
    <ligand>
        <name>S-adenosyl-L-methionine</name>
        <dbReference type="ChEBI" id="CHEBI:59789"/>
    </ligand>
</feature>
<feature type="modified residue" description="Phosphoserine" evidence="1">
    <location>
        <position position="128"/>
    </location>
</feature>
<accession>A8GKQ1</accession>
<protein>
    <recommendedName>
        <fullName evidence="1">Siroheme synthase 2</fullName>
    </recommendedName>
    <domain>
        <recommendedName>
            <fullName evidence="1">Uroporphyrinogen-III C-methyltransferase 2</fullName>
            <shortName evidence="1">Urogen III methylase 2</shortName>
            <ecNumber evidence="1">2.1.1.107</ecNumber>
        </recommendedName>
        <alternativeName>
            <fullName evidence="1">SUMT 2</fullName>
        </alternativeName>
        <alternativeName>
            <fullName evidence="1">Uroporphyrinogen III methylase 2</fullName>
            <shortName evidence="1">UROM 2</shortName>
        </alternativeName>
    </domain>
    <domain>
        <recommendedName>
            <fullName evidence="1">Precorrin-2 dehydrogenase 2</fullName>
            <ecNumber evidence="1">1.3.1.76</ecNumber>
        </recommendedName>
    </domain>
    <domain>
        <recommendedName>
            <fullName evidence="1">Sirohydrochlorin ferrochelatase 2</fullName>
            <ecNumber evidence="1">4.99.1.4</ecNumber>
        </recommendedName>
    </domain>
</protein>
<name>CYSG2_SERP5</name>
<dbReference type="EC" id="2.1.1.107" evidence="1"/>
<dbReference type="EC" id="1.3.1.76" evidence="1"/>
<dbReference type="EC" id="4.99.1.4" evidence="1"/>
<dbReference type="EMBL" id="CP000826">
    <property type="protein sequence ID" value="ABV43691.1"/>
    <property type="molecule type" value="Genomic_DNA"/>
</dbReference>
<dbReference type="SMR" id="A8GKQ1"/>
<dbReference type="STRING" id="399741.Spro_4598"/>
<dbReference type="KEGG" id="spe:Spro_4598"/>
<dbReference type="eggNOG" id="COG0007">
    <property type="taxonomic scope" value="Bacteria"/>
</dbReference>
<dbReference type="eggNOG" id="COG1648">
    <property type="taxonomic scope" value="Bacteria"/>
</dbReference>
<dbReference type="HOGENOM" id="CLU_011276_2_0_6"/>
<dbReference type="OrthoDB" id="9815856at2"/>
<dbReference type="UniPathway" id="UPA00148">
    <property type="reaction ID" value="UER00211"/>
</dbReference>
<dbReference type="UniPathway" id="UPA00148">
    <property type="reaction ID" value="UER00222"/>
</dbReference>
<dbReference type="UniPathway" id="UPA00262">
    <property type="reaction ID" value="UER00211"/>
</dbReference>
<dbReference type="UniPathway" id="UPA00262">
    <property type="reaction ID" value="UER00222"/>
</dbReference>
<dbReference type="UniPathway" id="UPA00262">
    <property type="reaction ID" value="UER00376"/>
</dbReference>
<dbReference type="GO" id="GO:0051287">
    <property type="term" value="F:NAD binding"/>
    <property type="evidence" value="ECO:0007669"/>
    <property type="project" value="InterPro"/>
</dbReference>
<dbReference type="GO" id="GO:0043115">
    <property type="term" value="F:precorrin-2 dehydrogenase activity"/>
    <property type="evidence" value="ECO:0007669"/>
    <property type="project" value="UniProtKB-UniRule"/>
</dbReference>
<dbReference type="GO" id="GO:0051266">
    <property type="term" value="F:sirohydrochlorin ferrochelatase activity"/>
    <property type="evidence" value="ECO:0007669"/>
    <property type="project" value="UniProtKB-EC"/>
</dbReference>
<dbReference type="GO" id="GO:0004851">
    <property type="term" value="F:uroporphyrin-III C-methyltransferase activity"/>
    <property type="evidence" value="ECO:0007669"/>
    <property type="project" value="UniProtKB-UniRule"/>
</dbReference>
<dbReference type="GO" id="GO:0009236">
    <property type="term" value="P:cobalamin biosynthetic process"/>
    <property type="evidence" value="ECO:0007669"/>
    <property type="project" value="UniProtKB-UniRule"/>
</dbReference>
<dbReference type="GO" id="GO:0032259">
    <property type="term" value="P:methylation"/>
    <property type="evidence" value="ECO:0007669"/>
    <property type="project" value="UniProtKB-KW"/>
</dbReference>
<dbReference type="GO" id="GO:0019354">
    <property type="term" value="P:siroheme biosynthetic process"/>
    <property type="evidence" value="ECO:0007669"/>
    <property type="project" value="UniProtKB-UniRule"/>
</dbReference>
<dbReference type="CDD" id="cd11642">
    <property type="entry name" value="SUMT"/>
    <property type="match status" value="1"/>
</dbReference>
<dbReference type="FunFam" id="3.30.160.110:FF:000001">
    <property type="entry name" value="Siroheme synthase"/>
    <property type="match status" value="1"/>
</dbReference>
<dbReference type="FunFam" id="3.30.950.10:FF:000001">
    <property type="entry name" value="Siroheme synthase"/>
    <property type="match status" value="1"/>
</dbReference>
<dbReference type="FunFam" id="3.40.1010.10:FF:000001">
    <property type="entry name" value="Siroheme synthase"/>
    <property type="match status" value="1"/>
</dbReference>
<dbReference type="FunFam" id="3.40.50.720:FF:000092">
    <property type="entry name" value="Siroheme synthase"/>
    <property type="match status" value="1"/>
</dbReference>
<dbReference type="Gene3D" id="3.40.1010.10">
    <property type="entry name" value="Cobalt-precorrin-4 Transmethylase, Domain 1"/>
    <property type="match status" value="1"/>
</dbReference>
<dbReference type="Gene3D" id="3.30.950.10">
    <property type="entry name" value="Methyltransferase, Cobalt-precorrin-4 Transmethylase, Domain 2"/>
    <property type="match status" value="1"/>
</dbReference>
<dbReference type="Gene3D" id="3.40.50.720">
    <property type="entry name" value="NAD(P)-binding Rossmann-like Domain"/>
    <property type="match status" value="1"/>
</dbReference>
<dbReference type="Gene3D" id="1.10.8.210">
    <property type="entry name" value="Sirohaem synthase, dimerisation domain"/>
    <property type="match status" value="1"/>
</dbReference>
<dbReference type="Gene3D" id="3.30.160.110">
    <property type="entry name" value="Siroheme synthase, domain 2"/>
    <property type="match status" value="1"/>
</dbReference>
<dbReference type="HAMAP" id="MF_01646">
    <property type="entry name" value="Siroheme_synth"/>
    <property type="match status" value="1"/>
</dbReference>
<dbReference type="InterPro" id="IPR000878">
    <property type="entry name" value="4pyrrol_Mease"/>
</dbReference>
<dbReference type="InterPro" id="IPR035996">
    <property type="entry name" value="4pyrrol_Methylase_sf"/>
</dbReference>
<dbReference type="InterPro" id="IPR014777">
    <property type="entry name" value="4pyrrole_Mease_sub1"/>
</dbReference>
<dbReference type="InterPro" id="IPR014776">
    <property type="entry name" value="4pyrrole_Mease_sub2"/>
</dbReference>
<dbReference type="InterPro" id="IPR006366">
    <property type="entry name" value="CobA/CysG_C"/>
</dbReference>
<dbReference type="InterPro" id="IPR036291">
    <property type="entry name" value="NAD(P)-bd_dom_sf"/>
</dbReference>
<dbReference type="InterPro" id="IPR050161">
    <property type="entry name" value="Siro_Cobalamin_biosynth"/>
</dbReference>
<dbReference type="InterPro" id="IPR037115">
    <property type="entry name" value="Sirohaem_synt_dimer_dom_sf"/>
</dbReference>
<dbReference type="InterPro" id="IPR012409">
    <property type="entry name" value="Sirohaem_synth"/>
</dbReference>
<dbReference type="InterPro" id="IPR028281">
    <property type="entry name" value="Sirohaem_synthase_central"/>
</dbReference>
<dbReference type="InterPro" id="IPR019478">
    <property type="entry name" value="Sirohaem_synthase_dimer_dom"/>
</dbReference>
<dbReference type="InterPro" id="IPR006367">
    <property type="entry name" value="Sirohaem_synthase_N"/>
</dbReference>
<dbReference type="InterPro" id="IPR003043">
    <property type="entry name" value="Uropor_MeTrfase_CS"/>
</dbReference>
<dbReference type="NCBIfam" id="TIGR01469">
    <property type="entry name" value="cobA_cysG_Cterm"/>
    <property type="match status" value="1"/>
</dbReference>
<dbReference type="NCBIfam" id="TIGR01470">
    <property type="entry name" value="cysG_Nterm"/>
    <property type="match status" value="1"/>
</dbReference>
<dbReference type="NCBIfam" id="NF004790">
    <property type="entry name" value="PRK06136.1"/>
    <property type="match status" value="1"/>
</dbReference>
<dbReference type="NCBIfam" id="NF007922">
    <property type="entry name" value="PRK10637.1"/>
    <property type="match status" value="1"/>
</dbReference>
<dbReference type="PANTHER" id="PTHR45790:SF1">
    <property type="entry name" value="SIROHEME SYNTHASE"/>
    <property type="match status" value="1"/>
</dbReference>
<dbReference type="PANTHER" id="PTHR45790">
    <property type="entry name" value="SIROHEME SYNTHASE-RELATED"/>
    <property type="match status" value="1"/>
</dbReference>
<dbReference type="Pfam" id="PF10414">
    <property type="entry name" value="CysG_dimeriser"/>
    <property type="match status" value="1"/>
</dbReference>
<dbReference type="Pfam" id="PF13241">
    <property type="entry name" value="NAD_binding_7"/>
    <property type="match status" value="1"/>
</dbReference>
<dbReference type="Pfam" id="PF14824">
    <property type="entry name" value="Sirohm_synth_M"/>
    <property type="match status" value="1"/>
</dbReference>
<dbReference type="Pfam" id="PF00590">
    <property type="entry name" value="TP_methylase"/>
    <property type="match status" value="1"/>
</dbReference>
<dbReference type="PIRSF" id="PIRSF036426">
    <property type="entry name" value="Sirohaem_synth"/>
    <property type="match status" value="1"/>
</dbReference>
<dbReference type="SUPFAM" id="SSF51735">
    <property type="entry name" value="NAD(P)-binding Rossmann-fold domains"/>
    <property type="match status" value="1"/>
</dbReference>
<dbReference type="SUPFAM" id="SSF75615">
    <property type="entry name" value="Siroheme synthase middle domains-like"/>
    <property type="match status" value="1"/>
</dbReference>
<dbReference type="SUPFAM" id="SSF53790">
    <property type="entry name" value="Tetrapyrrole methylase"/>
    <property type="match status" value="1"/>
</dbReference>
<dbReference type="PROSITE" id="PS00839">
    <property type="entry name" value="SUMT_1"/>
    <property type="match status" value="1"/>
</dbReference>
<dbReference type="PROSITE" id="PS00840">
    <property type="entry name" value="SUMT_2"/>
    <property type="match status" value="1"/>
</dbReference>